<reference key="1">
    <citation type="journal article" date="1991" name="J. Biol. Chem.">
        <title>Molecular cloning of the DNA and expression and characterization of rat testes fructose-6-phosphate,2-kinase:fructose-2,6-bisphosphatase.</title>
        <authorList>
            <person name="Sakata J."/>
            <person name="Abe Y."/>
            <person name="Uyeda K."/>
        </authorList>
    </citation>
    <scope>NUCLEOTIDE SEQUENCE [MRNA]</scope>
    <scope>TISSUE SPECIFICITY</scope>
    <scope>FUNCTION</scope>
    <scope>CATALYTIC ACTIVITY</scope>
    <scope>BIOPHYSICOCHEMICAL PROPERTIES</scope>
    <scope>SUBUNIT</scope>
    <scope>ACTIVITY REGULATION</scope>
    <source>
        <tissue>Testis</tissue>
    </source>
</reference>
<reference key="2">
    <citation type="journal article" date="1996" name="Structure">
        <title>The crystal structure of the bifunctional enzyme 6-phosphofructo-2-kinase/fructose-2,6-bisphosphatase reveals distinct domain homologies.</title>
        <authorList>
            <person name="Hasemann C.A."/>
            <person name="Istvan E.S."/>
            <person name="Uyeda K."/>
            <person name="Deisenhofer J."/>
        </authorList>
    </citation>
    <scope>X-RAY CRYSTALLOGRAPHY (2.0 ANGSTROMS) IN COMPLEX WITH ATP ANALOG</scope>
    <source>
        <tissue>Testis</tissue>
    </source>
</reference>
<reference key="3">
    <citation type="journal article" date="1999" name="J. Biol. Chem.">
        <title>Crystal structure of the H256A mutant of rat testis fructose-6-phosphate,2-kinase/fructose-2,6-bisphosphatase. Fructose 6-phosphate in the active site leads to mechanisms for both mutant and wild type bisphosphatase activities.</title>
        <authorList>
            <person name="Yuen M.H."/>
            <person name="Mizuguchi H."/>
            <person name="Lee Y.H."/>
            <person name="Cook P.F."/>
            <person name="Uyeda K."/>
            <person name="Hasemann C.A."/>
        </authorList>
    </citation>
    <scope>X-RAY CRYSTALLOGRAPHY (2.4 ANGSTROMS) OF MUTANT ALA-257 IN COMPLEX WITH ATP ANALOG; FRUCTOSE 6-PHOSPHATE AND PHOSPHATE ION</scope>
    <scope>SUBUNIT</scope>
    <scope>ACTIVE SITE</scope>
    <source>
        <tissue>Testis</tissue>
    </source>
</reference>
<dbReference type="EC" id="2.7.1.105" evidence="5"/>
<dbReference type="EC" id="3.1.3.46" evidence="5"/>
<dbReference type="EMBL" id="M64797">
    <property type="protein sequence ID" value="AAA41163.1"/>
    <property type="molecule type" value="mRNA"/>
</dbReference>
<dbReference type="PIR" id="A40800">
    <property type="entry name" value="A40800"/>
</dbReference>
<dbReference type="RefSeq" id="NP_001418512.1">
    <property type="nucleotide sequence ID" value="NM_001431583.1"/>
</dbReference>
<dbReference type="RefSeq" id="NP_062206.1">
    <property type="nucleotide sequence ID" value="NM_019333.2"/>
</dbReference>
<dbReference type="RefSeq" id="XP_008764785.1">
    <property type="nucleotide sequence ID" value="XM_008766563.2"/>
</dbReference>
<dbReference type="RefSeq" id="XP_017459205.1">
    <property type="nucleotide sequence ID" value="XM_017603716.1"/>
</dbReference>
<dbReference type="PDB" id="1BIF">
    <property type="method" value="X-ray"/>
    <property type="resolution" value="2.00 A"/>
    <property type="chains" value="A=1-469"/>
</dbReference>
<dbReference type="PDB" id="2BIF">
    <property type="method" value="X-ray"/>
    <property type="resolution" value="2.40 A"/>
    <property type="chains" value="A/B=1-469"/>
</dbReference>
<dbReference type="PDB" id="3BIF">
    <property type="method" value="X-ray"/>
    <property type="resolution" value="2.30 A"/>
    <property type="chains" value="A=2-469"/>
</dbReference>
<dbReference type="PDBsum" id="1BIF"/>
<dbReference type="PDBsum" id="2BIF"/>
<dbReference type="PDBsum" id="3BIF"/>
<dbReference type="SMR" id="P25114"/>
<dbReference type="ComplexPortal" id="CPX-2045">
    <property type="entry name" value="6-phosphofructo-2-kinase/fructose-2,6-biphosphatase 4 complex"/>
</dbReference>
<dbReference type="DIP" id="DIP-2904N"/>
<dbReference type="FunCoup" id="P25114">
    <property type="interactions" value="1439"/>
</dbReference>
<dbReference type="STRING" id="10116.ENSRNOP00000074158"/>
<dbReference type="GlyGen" id="P25114">
    <property type="glycosylation" value="1 site"/>
</dbReference>
<dbReference type="PhosphoSitePlus" id="P25114"/>
<dbReference type="jPOST" id="P25114"/>
<dbReference type="PaxDb" id="10116-ENSRNOP00000028039"/>
<dbReference type="Ensembl" id="ENSRNOT00000028039.5">
    <property type="protein sequence ID" value="ENSRNOP00000028039.2"/>
    <property type="gene ID" value="ENSRNOG00000020656.7"/>
</dbReference>
<dbReference type="GeneID" id="54283"/>
<dbReference type="KEGG" id="rno:54283"/>
<dbReference type="UCSC" id="RGD:3310">
    <property type="organism name" value="rat"/>
</dbReference>
<dbReference type="AGR" id="RGD:3310"/>
<dbReference type="CTD" id="5210"/>
<dbReference type="RGD" id="3310">
    <property type="gene designation" value="Pfkfb4"/>
</dbReference>
<dbReference type="eggNOG" id="KOG0234">
    <property type="taxonomic scope" value="Eukaryota"/>
</dbReference>
<dbReference type="GeneTree" id="ENSGT00950000182835"/>
<dbReference type="HOGENOM" id="CLU_006383_1_1_1"/>
<dbReference type="InParanoid" id="P25114"/>
<dbReference type="OMA" id="GECYGMT"/>
<dbReference type="OrthoDB" id="267323at2759"/>
<dbReference type="PhylomeDB" id="P25114"/>
<dbReference type="TreeFam" id="TF313541"/>
<dbReference type="BRENDA" id="2.7.1.105">
    <property type="organism ID" value="5301"/>
</dbReference>
<dbReference type="BRENDA" id="3.1.3.46">
    <property type="organism ID" value="5301"/>
</dbReference>
<dbReference type="Reactome" id="R-RNO-9634600">
    <property type="pathway name" value="Regulation of glycolysis by fructose 2,6-bisphosphate metabolism"/>
</dbReference>
<dbReference type="SABIO-RK" id="P25114"/>
<dbReference type="EvolutionaryTrace" id="P25114"/>
<dbReference type="PRO" id="PR:P25114"/>
<dbReference type="Proteomes" id="UP000002494">
    <property type="component" value="Chromosome 8"/>
</dbReference>
<dbReference type="Bgee" id="ENSRNOG00000020656">
    <property type="expression patterns" value="Expressed in jejunum and 18 other cell types or tissues"/>
</dbReference>
<dbReference type="ExpressionAtlas" id="P25114">
    <property type="expression patterns" value="baseline"/>
</dbReference>
<dbReference type="GO" id="GO:0005829">
    <property type="term" value="C:cytosol"/>
    <property type="evidence" value="ECO:0000318"/>
    <property type="project" value="GO_Central"/>
</dbReference>
<dbReference type="GO" id="GO:0003873">
    <property type="term" value="F:6-phosphofructo-2-kinase activity"/>
    <property type="evidence" value="ECO:0000314"/>
    <property type="project" value="RGD"/>
</dbReference>
<dbReference type="GO" id="GO:0005524">
    <property type="term" value="F:ATP binding"/>
    <property type="evidence" value="ECO:0007669"/>
    <property type="project" value="UniProtKB-KW"/>
</dbReference>
<dbReference type="GO" id="GO:0004331">
    <property type="term" value="F:fructose-2,6-bisphosphate 2-phosphatase activity"/>
    <property type="evidence" value="ECO:0000314"/>
    <property type="project" value="RGD"/>
</dbReference>
<dbReference type="GO" id="GO:0006003">
    <property type="term" value="P:fructose 2,6-bisphosphate metabolic process"/>
    <property type="evidence" value="ECO:0000318"/>
    <property type="project" value="GO_Central"/>
</dbReference>
<dbReference type="GO" id="GO:0006000">
    <property type="term" value="P:fructose metabolic process"/>
    <property type="evidence" value="ECO:0007669"/>
    <property type="project" value="InterPro"/>
</dbReference>
<dbReference type="CDD" id="cd07067">
    <property type="entry name" value="HP_PGM_like"/>
    <property type="match status" value="1"/>
</dbReference>
<dbReference type="FunFam" id="3.40.50.1240:FF:000001">
    <property type="entry name" value="6-phosphofructo-2-kinase/fructose-2, 6-bisphosphatase 3 isoform 2"/>
    <property type="match status" value="1"/>
</dbReference>
<dbReference type="FunFam" id="3.40.50.300:FF:000047">
    <property type="entry name" value="6-phosphofructo-2-kinase/fructose-2, 6-bisphosphatase 3 isoform 2"/>
    <property type="match status" value="1"/>
</dbReference>
<dbReference type="Gene3D" id="3.40.50.300">
    <property type="entry name" value="P-loop containing nucleotide triphosphate hydrolases"/>
    <property type="match status" value="1"/>
</dbReference>
<dbReference type="Gene3D" id="3.40.50.1240">
    <property type="entry name" value="Phosphoglycerate mutase-like"/>
    <property type="match status" value="1"/>
</dbReference>
<dbReference type="InterPro" id="IPR003094">
    <property type="entry name" value="6Pfruct_kin"/>
</dbReference>
<dbReference type="InterPro" id="IPR013079">
    <property type="entry name" value="6Phosfructo_kin"/>
</dbReference>
<dbReference type="InterPro" id="IPR013078">
    <property type="entry name" value="His_Pase_superF_clade-1"/>
</dbReference>
<dbReference type="InterPro" id="IPR029033">
    <property type="entry name" value="His_PPase_superfam"/>
</dbReference>
<dbReference type="InterPro" id="IPR027417">
    <property type="entry name" value="P-loop_NTPase"/>
</dbReference>
<dbReference type="InterPro" id="IPR001345">
    <property type="entry name" value="PG/BPGM_mutase_AS"/>
</dbReference>
<dbReference type="PANTHER" id="PTHR10606">
    <property type="entry name" value="6-PHOSPHOFRUCTO-2-KINASE/FRUCTOSE-2,6-BISPHOSPHATASE"/>
    <property type="match status" value="1"/>
</dbReference>
<dbReference type="PANTHER" id="PTHR10606:SF14">
    <property type="entry name" value="6-PHOSPHOFRUCTO-2-KINASE_FRUCTOSE-2,6-BISPHOSPHATASE 4"/>
    <property type="match status" value="1"/>
</dbReference>
<dbReference type="Pfam" id="PF01591">
    <property type="entry name" value="6PF2K"/>
    <property type="match status" value="1"/>
</dbReference>
<dbReference type="Pfam" id="PF00300">
    <property type="entry name" value="His_Phos_1"/>
    <property type="match status" value="1"/>
</dbReference>
<dbReference type="PIRSF" id="PIRSF000709">
    <property type="entry name" value="6PFK_2-Ptase"/>
    <property type="match status" value="1"/>
</dbReference>
<dbReference type="PRINTS" id="PR00991">
    <property type="entry name" value="6PFRUCTKNASE"/>
</dbReference>
<dbReference type="SMART" id="SM00855">
    <property type="entry name" value="PGAM"/>
    <property type="match status" value="1"/>
</dbReference>
<dbReference type="SUPFAM" id="SSF52540">
    <property type="entry name" value="P-loop containing nucleoside triphosphate hydrolases"/>
    <property type="match status" value="1"/>
</dbReference>
<dbReference type="SUPFAM" id="SSF53254">
    <property type="entry name" value="Phosphoglycerate mutase-like"/>
    <property type="match status" value="1"/>
</dbReference>
<dbReference type="PROSITE" id="PS00175">
    <property type="entry name" value="PG_MUTASE"/>
    <property type="match status" value="1"/>
</dbReference>
<proteinExistence type="evidence at protein level"/>
<feature type="chain" id="PRO_0000179971" description="6-phosphofructo-2-kinase/fructose-2,6-bisphosphatase 4">
    <location>
        <begin position="1"/>
        <end position="469"/>
    </location>
</feature>
<feature type="region of interest" description="6-phosphofructo-2-kinase" evidence="9">
    <location>
        <begin position="1"/>
        <end position="249"/>
    </location>
</feature>
<feature type="region of interest" description="Fructose-2,6-bisphosphatase" evidence="9">
    <location>
        <begin position="250"/>
        <end position="469"/>
    </location>
</feature>
<feature type="active site" evidence="4">
    <location>
        <position position="129"/>
    </location>
</feature>
<feature type="active site" evidence="4">
    <location>
        <position position="159"/>
    </location>
</feature>
<feature type="active site" description="Tele-phosphohistidine intermediate" evidence="7">
    <location>
        <position position="257"/>
    </location>
</feature>
<feature type="active site" description="Proton donor/acceptor" evidence="7">
    <location>
        <position position="326"/>
    </location>
</feature>
<feature type="binding site" evidence="6">
    <location>
        <begin position="46"/>
        <end position="54"/>
    </location>
    <ligand>
        <name>ATP</name>
        <dbReference type="ChEBI" id="CHEBI:30616"/>
    </ligand>
</feature>
<feature type="binding site" evidence="7">
    <location>
        <position position="79"/>
    </location>
    <ligand>
        <name>beta-D-fructose 6-phosphate</name>
        <dbReference type="ChEBI" id="CHEBI:57634"/>
    </ligand>
</feature>
<feature type="binding site" evidence="3">
    <location>
        <position position="103"/>
    </location>
    <ligand>
        <name>beta-D-fructose 6-phosphate</name>
        <dbReference type="ChEBI" id="CHEBI:57634"/>
    </ligand>
</feature>
<feature type="binding site" evidence="7">
    <location>
        <position position="131"/>
    </location>
    <ligand>
        <name>beta-D-fructose 6-phosphate</name>
        <dbReference type="ChEBI" id="CHEBI:57634"/>
    </ligand>
</feature>
<feature type="binding site" evidence="7">
    <location>
        <position position="137"/>
    </location>
    <ligand>
        <name>beta-D-fructose 6-phosphate</name>
        <dbReference type="ChEBI" id="CHEBI:57634"/>
    </ligand>
</feature>
<feature type="binding site" evidence="6">
    <location>
        <begin position="168"/>
        <end position="173"/>
    </location>
    <ligand>
        <name>ATP</name>
        <dbReference type="ChEBI" id="CHEBI:30616"/>
    </ligand>
</feature>
<feature type="binding site" evidence="3">
    <location>
        <position position="173"/>
    </location>
    <ligand>
        <name>beta-D-fructose 6-phosphate</name>
        <dbReference type="ChEBI" id="CHEBI:57634"/>
    </ligand>
</feature>
<feature type="binding site" evidence="3">
    <location>
        <position position="194"/>
    </location>
    <ligand>
        <name>beta-D-fructose 6-phosphate</name>
        <dbReference type="ChEBI" id="CHEBI:57634"/>
    </ligand>
</feature>
<feature type="binding site" evidence="7">
    <location>
        <position position="198"/>
    </location>
    <ligand>
        <name>beta-D-fructose 6-phosphate</name>
        <dbReference type="ChEBI" id="CHEBI:57634"/>
    </ligand>
</feature>
<feature type="binding site" evidence="3">
    <location>
        <position position="256"/>
    </location>
    <ligand>
        <name>beta-D-fructose 2,6-bisphosphate</name>
        <dbReference type="ChEBI" id="CHEBI:58579"/>
    </ligand>
</feature>
<feature type="binding site" evidence="3">
    <location>
        <position position="263"/>
    </location>
    <ligand>
        <name>beta-D-fructose 2,6-bisphosphate</name>
        <dbReference type="ChEBI" id="CHEBI:58579"/>
    </ligand>
</feature>
<feature type="binding site" evidence="7">
    <location>
        <position position="269"/>
    </location>
    <ligand>
        <name>beta-D-fructose 2,6-bisphosphate</name>
        <dbReference type="ChEBI" id="CHEBI:58579"/>
    </ligand>
</feature>
<feature type="binding site" evidence="3">
    <location>
        <position position="306"/>
    </location>
    <ligand>
        <name>beta-D-fructose 2,6-bisphosphate</name>
        <dbReference type="ChEBI" id="CHEBI:58579"/>
    </ligand>
</feature>
<feature type="binding site" evidence="7">
    <location>
        <position position="337"/>
    </location>
    <ligand>
        <name>beta-D-fructose 2,6-bisphosphate</name>
        <dbReference type="ChEBI" id="CHEBI:58579"/>
    </ligand>
</feature>
<feature type="binding site" evidence="2">
    <location>
        <begin position="348"/>
        <end position="351"/>
    </location>
    <ligand>
        <name>ATP</name>
        <dbReference type="ChEBI" id="CHEBI:30616"/>
    </ligand>
</feature>
<feature type="binding site" evidence="7">
    <location>
        <position position="351"/>
    </location>
    <ligand>
        <name>beta-D-fructose 2,6-bisphosphate</name>
        <dbReference type="ChEBI" id="CHEBI:58579"/>
    </ligand>
</feature>
<feature type="binding site" evidence="7">
    <location>
        <position position="355"/>
    </location>
    <ligand>
        <name>beta-D-fructose 2,6-bisphosphate</name>
        <dbReference type="ChEBI" id="CHEBI:58579"/>
    </ligand>
</feature>
<feature type="binding site" evidence="7">
    <location>
        <position position="366"/>
    </location>
    <ligand>
        <name>beta-D-fructose 2,6-bisphosphate</name>
        <dbReference type="ChEBI" id="CHEBI:58579"/>
    </ligand>
</feature>
<feature type="binding site" evidence="2">
    <location>
        <begin position="392"/>
        <end position="396"/>
    </location>
    <ligand>
        <name>ATP</name>
        <dbReference type="ChEBI" id="CHEBI:30616"/>
    </ligand>
</feature>
<feature type="binding site" evidence="7">
    <location>
        <position position="392"/>
    </location>
    <ligand>
        <name>beta-D-fructose 2,6-bisphosphate</name>
        <dbReference type="ChEBI" id="CHEBI:58579"/>
    </ligand>
</feature>
<feature type="binding site" evidence="7">
    <location>
        <position position="396"/>
    </location>
    <ligand>
        <name>beta-D-fructose 2,6-bisphosphate</name>
        <dbReference type="ChEBI" id="CHEBI:58579"/>
    </ligand>
</feature>
<feature type="binding site" evidence="6">
    <location>
        <position position="428"/>
    </location>
    <ligand>
        <name>ATP</name>
        <dbReference type="ChEBI" id="CHEBI:30616"/>
    </ligand>
</feature>
<feature type="site" description="Transition state stabilizer" evidence="1">
    <location>
        <position position="391"/>
    </location>
</feature>
<feature type="modified residue" description="Phosphoserine; by PKC" evidence="4">
    <location>
        <position position="29"/>
    </location>
</feature>
<feature type="modified residue" description="Phosphothreonine; by PKC" evidence="4">
    <location>
        <position position="444"/>
    </location>
</feature>
<feature type="strand" evidence="10">
    <location>
        <begin position="40"/>
        <end position="45"/>
    </location>
</feature>
<feature type="helix" evidence="10">
    <location>
        <begin position="52"/>
        <end position="65"/>
    </location>
</feature>
<feature type="strand" evidence="10">
    <location>
        <begin position="70"/>
        <end position="74"/>
    </location>
</feature>
<feature type="helix" evidence="10">
    <location>
        <begin position="75"/>
        <end position="83"/>
    </location>
</feature>
<feature type="helix" evidence="10">
    <location>
        <begin position="89"/>
        <end position="92"/>
    </location>
</feature>
<feature type="helix" evidence="10">
    <location>
        <begin position="97"/>
        <end position="119"/>
    </location>
</feature>
<feature type="strand" evidence="10">
    <location>
        <begin position="124"/>
        <end position="130"/>
    </location>
</feature>
<feature type="helix" evidence="10">
    <location>
        <begin position="135"/>
        <end position="148"/>
    </location>
</feature>
<feature type="strand" evidence="10">
    <location>
        <begin position="151"/>
        <end position="157"/>
    </location>
</feature>
<feature type="helix" evidence="10">
    <location>
        <begin position="162"/>
        <end position="172"/>
    </location>
</feature>
<feature type="turn" evidence="10">
    <location>
        <begin position="173"/>
        <end position="175"/>
    </location>
</feature>
<feature type="turn" evidence="10">
    <location>
        <begin position="177"/>
        <end position="181"/>
    </location>
</feature>
<feature type="helix" evidence="10">
    <location>
        <begin position="184"/>
        <end position="199"/>
    </location>
</feature>
<feature type="turn" evidence="10">
    <location>
        <begin position="207"/>
        <end position="212"/>
    </location>
</feature>
<feature type="strand" evidence="10">
    <location>
        <begin position="215"/>
        <end position="218"/>
    </location>
</feature>
<feature type="turn" evidence="10">
    <location>
        <begin position="220"/>
        <end position="222"/>
    </location>
</feature>
<feature type="strand" evidence="10">
    <location>
        <begin position="225"/>
        <end position="228"/>
    </location>
</feature>
<feature type="helix" evidence="10">
    <location>
        <begin position="233"/>
        <end position="242"/>
    </location>
</feature>
<feature type="strand" evidence="10">
    <location>
        <begin position="252"/>
        <end position="256"/>
    </location>
</feature>
<feature type="helix" evidence="10">
    <location>
        <begin position="261"/>
        <end position="265"/>
    </location>
</feature>
<feature type="helix" evidence="10">
    <location>
        <begin position="276"/>
        <end position="292"/>
    </location>
</feature>
<feature type="strand" evidence="10">
    <location>
        <begin position="298"/>
        <end position="301"/>
    </location>
</feature>
<feature type="helix" evidence="10">
    <location>
        <begin position="305"/>
        <end position="311"/>
    </location>
</feature>
<feature type="strand" evidence="10">
    <location>
        <begin position="314"/>
        <end position="316"/>
    </location>
</feature>
<feature type="strand" evidence="12">
    <location>
        <begin position="318"/>
        <end position="320"/>
    </location>
</feature>
<feature type="helix" evidence="10">
    <location>
        <begin position="322"/>
        <end position="324"/>
    </location>
</feature>
<feature type="helix" evidence="10">
    <location>
        <begin position="330"/>
        <end position="332"/>
    </location>
</feature>
<feature type="helix" evidence="10">
    <location>
        <begin position="337"/>
        <end position="343"/>
    </location>
</feature>
<feature type="helix" evidence="10">
    <location>
        <begin position="345"/>
        <end position="353"/>
    </location>
</feature>
<feature type="turn" evidence="10">
    <location>
        <begin position="355"/>
        <end position="357"/>
    </location>
</feature>
<feature type="helix" evidence="10">
    <location>
        <begin position="366"/>
        <end position="382"/>
    </location>
</feature>
<feature type="strand" evidence="10">
    <location>
        <begin position="384"/>
        <end position="390"/>
    </location>
</feature>
<feature type="helix" evidence="10">
    <location>
        <begin position="392"/>
        <end position="402"/>
    </location>
</feature>
<feature type="turn" evidence="10">
    <location>
        <begin position="407"/>
        <end position="409"/>
    </location>
</feature>
<feature type="helix" evidence="10">
    <location>
        <begin position="410"/>
        <end position="412"/>
    </location>
</feature>
<feature type="strand" evidence="10">
    <location>
        <begin position="419"/>
        <end position="425"/>
    </location>
</feature>
<feature type="strand" evidence="10">
    <location>
        <begin position="427"/>
        <end position="436"/>
    </location>
</feature>
<feature type="helix" evidence="10">
    <location>
        <begin position="458"/>
        <end position="461"/>
    </location>
</feature>
<feature type="turn" evidence="11">
    <location>
        <begin position="462"/>
        <end position="464"/>
    </location>
</feature>
<name>F264_RAT</name>
<comment type="function">
    <text evidence="5">Synthesis and degradation of fructose 2,6-bisphosphate.</text>
</comment>
<comment type="catalytic activity">
    <reaction evidence="5">
        <text>beta-D-fructose 2,6-bisphosphate + H2O = beta-D-fructose 6-phosphate + phosphate</text>
        <dbReference type="Rhea" id="RHEA:17289"/>
        <dbReference type="ChEBI" id="CHEBI:15377"/>
        <dbReference type="ChEBI" id="CHEBI:43474"/>
        <dbReference type="ChEBI" id="CHEBI:57634"/>
        <dbReference type="ChEBI" id="CHEBI:58579"/>
        <dbReference type="EC" id="3.1.3.46"/>
    </reaction>
    <physiologicalReaction direction="left-to-right" evidence="9">
        <dbReference type="Rhea" id="RHEA:17290"/>
    </physiologicalReaction>
</comment>
<comment type="catalytic activity">
    <reaction evidence="5">
        <text>beta-D-fructose 6-phosphate + ATP = beta-D-fructose 2,6-bisphosphate + ADP + H(+)</text>
        <dbReference type="Rhea" id="RHEA:15653"/>
        <dbReference type="ChEBI" id="CHEBI:15378"/>
        <dbReference type="ChEBI" id="CHEBI:30616"/>
        <dbReference type="ChEBI" id="CHEBI:57634"/>
        <dbReference type="ChEBI" id="CHEBI:58579"/>
        <dbReference type="ChEBI" id="CHEBI:456216"/>
        <dbReference type="EC" id="2.7.1.105"/>
    </reaction>
    <physiologicalReaction direction="left-to-right" evidence="9">
        <dbReference type="Rhea" id="RHEA:15654"/>
    </physiologicalReaction>
</comment>
<comment type="activity regulation">
    <text evidence="5">The most important regulatory mechanism of these opposing activities is by phosphorylation and dephosphorylation of the enzyme.</text>
</comment>
<comment type="biophysicochemical properties">
    <kinetics>
        <KM evidence="5">85 uM for beta-D-fructose 6-phosphate</KM>
        <KM evidence="5">270 uM for ATP</KM>
        <KM evidence="5">21 uM for beta-D-fructose 2,6-bisphosphate</KM>
    </kinetics>
</comment>
<comment type="subunit">
    <text evidence="5 6 7">Homodimer.</text>
</comment>
<comment type="tissue specificity">
    <text evidence="5">Testis.</text>
</comment>
<comment type="similarity">
    <text evidence="8">In the C-terminal section; belongs to the phosphoglycerate mutase family.</text>
</comment>
<organism>
    <name type="scientific">Rattus norvegicus</name>
    <name type="common">Rat</name>
    <dbReference type="NCBI Taxonomy" id="10116"/>
    <lineage>
        <taxon>Eukaryota</taxon>
        <taxon>Metazoa</taxon>
        <taxon>Chordata</taxon>
        <taxon>Craniata</taxon>
        <taxon>Vertebrata</taxon>
        <taxon>Euteleostomi</taxon>
        <taxon>Mammalia</taxon>
        <taxon>Eutheria</taxon>
        <taxon>Euarchontoglires</taxon>
        <taxon>Glires</taxon>
        <taxon>Rodentia</taxon>
        <taxon>Myomorpha</taxon>
        <taxon>Muroidea</taxon>
        <taxon>Muridae</taxon>
        <taxon>Murinae</taxon>
        <taxon>Rattus</taxon>
    </lineage>
</organism>
<accession>P25114</accession>
<protein>
    <recommendedName>
        <fullName>6-phosphofructo-2-kinase/fructose-2,6-bisphosphatase 4</fullName>
        <shortName>6PF-2-K/Fru-2,6-P2ase 4</shortName>
        <shortName>PFK/FBPase 4</shortName>
    </recommendedName>
    <alternativeName>
        <fullName>6PF-2-K/Fru-2,6-P2ase testis-type isozyme</fullName>
    </alternativeName>
    <domain>
        <recommendedName>
            <fullName>6-phosphofructo-2-kinase</fullName>
            <ecNumber evidence="5">2.7.1.105</ecNumber>
        </recommendedName>
    </domain>
    <domain>
        <recommendedName>
            <fullName>Fructose-2,6-bisphosphatase</fullName>
            <ecNumber evidence="5">3.1.3.46</ecNumber>
        </recommendedName>
    </domain>
</protein>
<evidence type="ECO:0000250" key="1">
    <source>
        <dbReference type="UniProtKB" id="P00950"/>
    </source>
</evidence>
<evidence type="ECO:0000250" key="2">
    <source>
        <dbReference type="UniProtKB" id="P07953"/>
    </source>
</evidence>
<evidence type="ECO:0000250" key="3">
    <source>
        <dbReference type="UniProtKB" id="Q16875"/>
    </source>
</evidence>
<evidence type="ECO:0000255" key="4"/>
<evidence type="ECO:0000269" key="5">
    <source>
    </source>
</evidence>
<evidence type="ECO:0000269" key="6">
    <source>
    </source>
</evidence>
<evidence type="ECO:0000269" key="7">
    <source>
    </source>
</evidence>
<evidence type="ECO:0000305" key="8"/>
<evidence type="ECO:0000305" key="9">
    <source>
    </source>
</evidence>
<evidence type="ECO:0007829" key="10">
    <source>
        <dbReference type="PDB" id="1BIF"/>
    </source>
</evidence>
<evidence type="ECO:0007829" key="11">
    <source>
        <dbReference type="PDB" id="2BIF"/>
    </source>
</evidence>
<evidence type="ECO:0007829" key="12">
    <source>
        <dbReference type="PDB" id="3BIF"/>
    </source>
</evidence>
<gene>
    <name type="primary">Pfkfb4</name>
</gene>
<sequence length="469" mass="54155">MASPRELTQNPLKKIWMPYSNGRPALHASQRGVCMTNCPTLIVMVGLPARGKTYISKKLTRYLNWIGVPTREFNVGQYRRDMVKTYKSFEFFLPDNEEGLKIRKQCALAALNDVRKFLSEEGGHVAVFDATNTTRERRAMIFNFGEQNGYKTFFVESICVDPEVIAANIVQVKLGSPDYVNRDSDEATEDFMRRIECYENSYESLDEEQDRDLSYIKIMDVGQSYVVNRVADHIQSRIVYYLMNIHVTPRSIYLCRHGESELNLKGRIGGDPGLSPRGREFSKHLAQFISDQNIKDLKVWTSQMKRTIQTAEALSVPYEQWKVLNEIDAGVCEEMTYEEIQDHYPLEFALRDQDKYRYRYPKGESYEDLVQRLEPVIMELERQENVLVICHQAVMRCLLAYFLDKAAEELPYLKCPLHTVLKLTPVAYGCKVESIFLNVAAVNTHRDRPQNVDISRPSEEALVTVPAHQ</sequence>
<keyword id="KW-0002">3D-structure</keyword>
<keyword id="KW-0067">ATP-binding</keyword>
<keyword id="KW-0378">Hydrolase</keyword>
<keyword id="KW-0418">Kinase</keyword>
<keyword id="KW-0511">Multifunctional enzyme</keyword>
<keyword id="KW-0547">Nucleotide-binding</keyword>
<keyword id="KW-0597">Phosphoprotein</keyword>
<keyword id="KW-1185">Reference proteome</keyword>
<keyword id="KW-0808">Transferase</keyword>